<name>BGLH_ECODH</name>
<accession>B1X9U9</accession>
<proteinExistence type="inferred from homology"/>
<dbReference type="EMBL" id="CP000948">
    <property type="protein sequence ID" value="ACB04764.1"/>
    <property type="molecule type" value="Genomic_DNA"/>
</dbReference>
<dbReference type="RefSeq" id="WP_000489881.1">
    <property type="nucleotide sequence ID" value="NC_010473.1"/>
</dbReference>
<dbReference type="SMR" id="B1X9U9"/>
<dbReference type="KEGG" id="ecd:ECDH10B_3907"/>
<dbReference type="HOGENOM" id="CLU_032473_2_1_6"/>
<dbReference type="GO" id="GO:0009279">
    <property type="term" value="C:cell outer membrane"/>
    <property type="evidence" value="ECO:0007669"/>
    <property type="project" value="UniProtKB-SubCell"/>
</dbReference>
<dbReference type="GO" id="GO:0046930">
    <property type="term" value="C:pore complex"/>
    <property type="evidence" value="ECO:0007669"/>
    <property type="project" value="UniProtKB-KW"/>
</dbReference>
<dbReference type="GO" id="GO:0015144">
    <property type="term" value="F:carbohydrate transmembrane transporter activity"/>
    <property type="evidence" value="ECO:0007669"/>
    <property type="project" value="TreeGrafter"/>
</dbReference>
<dbReference type="GO" id="GO:0015288">
    <property type="term" value="F:porin activity"/>
    <property type="evidence" value="ECO:0007669"/>
    <property type="project" value="UniProtKB-KW"/>
</dbReference>
<dbReference type="GO" id="GO:0006811">
    <property type="term" value="P:monoatomic ion transport"/>
    <property type="evidence" value="ECO:0007669"/>
    <property type="project" value="UniProtKB-KW"/>
</dbReference>
<dbReference type="GO" id="GO:0015774">
    <property type="term" value="P:polysaccharide transport"/>
    <property type="evidence" value="ECO:0007669"/>
    <property type="project" value="TreeGrafter"/>
</dbReference>
<dbReference type="CDD" id="cd01346">
    <property type="entry name" value="Maltoporin-like"/>
    <property type="match status" value="1"/>
</dbReference>
<dbReference type="FunFam" id="2.40.170.10:FF:000002">
    <property type="entry name" value="Cryptic outer membrane porin BglH"/>
    <property type="match status" value="1"/>
</dbReference>
<dbReference type="Gene3D" id="2.40.170.10">
    <property type="entry name" value="Porin, LamB type"/>
    <property type="match status" value="1"/>
</dbReference>
<dbReference type="InterPro" id="IPR050286">
    <property type="entry name" value="G_neg_Bact_CarbUptk_Porin"/>
</dbReference>
<dbReference type="InterPro" id="IPR021570">
    <property type="entry name" value="LamB-type_porin_N_dom"/>
</dbReference>
<dbReference type="InterPro" id="IPR003192">
    <property type="entry name" value="Porin_LamB"/>
</dbReference>
<dbReference type="InterPro" id="IPR036998">
    <property type="entry name" value="Porin_LamB_sf"/>
</dbReference>
<dbReference type="PANTHER" id="PTHR38762">
    <property type="entry name" value="CRYPTIC OUTER MEMBRANE PORIN BGLH-RELATED"/>
    <property type="match status" value="1"/>
</dbReference>
<dbReference type="PANTHER" id="PTHR38762:SF1">
    <property type="entry name" value="CRYPTIC OUTER MEMBRANE PORIN BGLH-RELATED"/>
    <property type="match status" value="1"/>
</dbReference>
<dbReference type="Pfam" id="PF02264">
    <property type="entry name" value="LamB"/>
    <property type="match status" value="1"/>
</dbReference>
<dbReference type="Pfam" id="PF11471">
    <property type="entry name" value="Sugarporin_N"/>
    <property type="match status" value="1"/>
</dbReference>
<dbReference type="SUPFAM" id="SSF56935">
    <property type="entry name" value="Porins"/>
    <property type="match status" value="1"/>
</dbReference>
<keyword id="KW-0998">Cell outer membrane</keyword>
<keyword id="KW-0406">Ion transport</keyword>
<keyword id="KW-0472">Membrane</keyword>
<keyword id="KW-0626">Porin</keyword>
<keyword id="KW-0732">Signal</keyword>
<keyword id="KW-0812">Transmembrane</keyword>
<keyword id="KW-1134">Transmembrane beta strand</keyword>
<keyword id="KW-0813">Transport</keyword>
<gene>
    <name type="primary">bglH</name>
    <name type="ordered locus">ECDH10B_3907</name>
</gene>
<protein>
    <recommendedName>
        <fullName>Putative outer membrane porin BglH</fullName>
    </recommendedName>
</protein>
<reference key="1">
    <citation type="journal article" date="2008" name="J. Bacteriol.">
        <title>The complete genome sequence of Escherichia coli DH10B: insights into the biology of a laboratory workhorse.</title>
        <authorList>
            <person name="Durfee T."/>
            <person name="Nelson R."/>
            <person name="Baldwin S."/>
            <person name="Plunkett G. III"/>
            <person name="Burland V."/>
            <person name="Mau B."/>
            <person name="Petrosino J.F."/>
            <person name="Qin X."/>
            <person name="Muzny D.M."/>
            <person name="Ayele M."/>
            <person name="Gibbs R.A."/>
            <person name="Csorgo B."/>
            <person name="Posfai G."/>
            <person name="Weinstock G.M."/>
            <person name="Blattner F.R."/>
        </authorList>
    </citation>
    <scope>NUCLEOTIDE SEQUENCE [LARGE SCALE GENOMIC DNA]</scope>
    <source>
        <strain>K12 / DH10B</strain>
    </source>
</reference>
<organism>
    <name type="scientific">Escherichia coli (strain K12 / DH10B)</name>
    <dbReference type="NCBI Taxonomy" id="316385"/>
    <lineage>
        <taxon>Bacteria</taxon>
        <taxon>Pseudomonadati</taxon>
        <taxon>Pseudomonadota</taxon>
        <taxon>Gammaproteobacteria</taxon>
        <taxon>Enterobacterales</taxon>
        <taxon>Enterobacteriaceae</taxon>
        <taxon>Escherichia</taxon>
    </lineage>
</organism>
<evidence type="ECO:0000255" key="1"/>
<evidence type="ECO:0000256" key="2">
    <source>
        <dbReference type="SAM" id="MobiDB-lite"/>
    </source>
</evidence>
<evidence type="ECO:0000305" key="3"/>
<feature type="signal peptide" evidence="1">
    <location>
        <begin position="1"/>
        <end position="25"/>
    </location>
</feature>
<feature type="chain" id="PRO_0000355018" description="Putative outer membrane porin BglH">
    <location>
        <begin position="26"/>
        <end position="538"/>
    </location>
</feature>
<feature type="region of interest" description="Disordered" evidence="2">
    <location>
        <begin position="52"/>
        <end position="82"/>
    </location>
</feature>
<feature type="compositionally biased region" description="Polar residues" evidence="2">
    <location>
        <begin position="62"/>
        <end position="73"/>
    </location>
</feature>
<sequence>MFRRNLITSAILLMAPLAFSAQSLAESLTVEQRLELLEKALRETQSELKKYKDEEKKKYTPATVNRSVSTNDQGYAANPFPTSSAAKPDAVLVKNEEKNASETGSIYSSMTLKDFSKFVKDEIGFSYNGYYRSGWGTASHGSPKSWAIGSLGRFGNEYSGWFDLQLKQRVYNENGKRVDAVVMMDGNVGQQYSTGWFGDNAGGENYMQFSDMYVTTKGFLPFAPEADFWVGKHGAPKIEIQMLDWKTQRTDAAAGVGLENWKVGPGKIDIALVREDVDDYDRSLQNKQQINTNTIDLRYKDIPLWDKATLMVSGRYVTANESASEKDNQDNNGYYDWKDTWMFGTSLTQKFDKGGFNEFSFLVANNSIASNFGRYAGASPFTTFNGRYYGDHTGGTAVRLTSQGEAYIGDHFIVANAIVYSFGNDIYSYETGAHSDFESIRAVVRPAYIWDQYNQTGVELGYFTQQNKDANSNKFNESGYKTTLFHTFKVNTSMLTSRPEIRFYATYIKALENELDGFTFEDNKDDQFAVGAQAEIWW</sequence>
<comment type="function">
    <text evidence="3">May be a sugar porin with a broad carbohydrate specificity.</text>
</comment>
<comment type="subcellular location">
    <subcellularLocation>
        <location evidence="3">Cell outer membrane</location>
        <topology evidence="3">Multi-pass membrane protein</topology>
    </subcellularLocation>
</comment>
<comment type="similarity">
    <text evidence="3">Belongs to the porin LamB (TC 1.B.3) family.</text>
</comment>